<reference key="1">
    <citation type="submission" date="2006-12" db="EMBL/GenBank/DDBJ databases">
        <title>Complete sequence of chromosome 1 of Acidovorax sp. JS42.</title>
        <authorList>
            <person name="Copeland A."/>
            <person name="Lucas S."/>
            <person name="Lapidus A."/>
            <person name="Barry K."/>
            <person name="Detter J.C."/>
            <person name="Glavina del Rio T."/>
            <person name="Dalin E."/>
            <person name="Tice H."/>
            <person name="Pitluck S."/>
            <person name="Chertkov O."/>
            <person name="Brettin T."/>
            <person name="Bruce D."/>
            <person name="Han C."/>
            <person name="Tapia R."/>
            <person name="Gilna P."/>
            <person name="Schmutz J."/>
            <person name="Larimer F."/>
            <person name="Land M."/>
            <person name="Hauser L."/>
            <person name="Kyrpides N."/>
            <person name="Kim E."/>
            <person name="Stahl D."/>
            <person name="Richardson P."/>
        </authorList>
    </citation>
    <scope>NUCLEOTIDE SEQUENCE [LARGE SCALE GENOMIC DNA]</scope>
    <source>
        <strain>JS42</strain>
    </source>
</reference>
<keyword id="KW-0169">Cobalamin biosynthesis</keyword>
<keyword id="KW-0315">Glutamine amidotransferase</keyword>
<comment type="function">
    <text evidence="1">Catalyzes amidations at positions B, D, E, and G on adenosylcobyrinic A,C-diamide. NH(2) groups are provided by glutamine, and one molecule of ATP is hydrogenolyzed for each amidation.</text>
</comment>
<comment type="pathway">
    <text evidence="1">Cofactor biosynthesis; adenosylcobalamin biosynthesis.</text>
</comment>
<comment type="similarity">
    <text evidence="1">Belongs to the CobB/CobQ family. CobQ subfamily.</text>
</comment>
<gene>
    <name evidence="1" type="primary">cobQ</name>
    <name type="ordered locus">Ajs_3178</name>
</gene>
<feature type="chain" id="PRO_0000332317" description="Cobyric acid synthase">
    <location>
        <begin position="1"/>
        <end position="493"/>
    </location>
</feature>
<feature type="domain" description="GATase cobBQ-type" evidence="1">
    <location>
        <begin position="261"/>
        <end position="455"/>
    </location>
</feature>
<feature type="active site" description="Nucleophile" evidence="1">
    <location>
        <position position="342"/>
    </location>
</feature>
<feature type="active site" evidence="1">
    <location>
        <position position="447"/>
    </location>
</feature>
<sequence>MNKTRPGPARCVMVLGTTSGAGKSWLATALCRYYSNQGLKVAPFKAQNMSNNARVVAAPGEQFGEIGSAQYFQALAARAVPDVRMNPLLLKPEADTKSQVVLLGQVSDELSQLPWRGRSQRVWPQIAAALDALRAENDVVVIEGAGSPAEINLHASDVVNMRVARHAEARCLLVTDIDRGGAFAHLFGTWALLPEEERALIAGFVLNKFRGDEALLAPAPQMLQDKTGVPVVATIPMQWNHGLPEEDGVFDMRSTAVGAVHTRIAVVAYPRISNLDEFQPLKNVPGVRLSWARSPADVEGADWIVLPGSKATAADLAWLRAQGLDAAIAAHAARGGRVLGVCGGLQMLGEALIDTVGVDGNGPGLGLLPLVTSFEATKTVRPTRQCFGAVQGAWRHLAGVAVQGYEIHHGQTAQHPAMAASGDVARELMPGLAWQNPAGNVLGLYLHGLFEDAAVLRALFGADAPTLDAVFEGLAAGIARHFEPRALDALAAQ</sequence>
<dbReference type="EMBL" id="CP000539">
    <property type="protein sequence ID" value="ABM43301.1"/>
    <property type="molecule type" value="Genomic_DNA"/>
</dbReference>
<dbReference type="SMR" id="A1WAM6"/>
<dbReference type="STRING" id="232721.Ajs_3178"/>
<dbReference type="KEGG" id="ajs:Ajs_3178"/>
<dbReference type="eggNOG" id="COG1492">
    <property type="taxonomic scope" value="Bacteria"/>
</dbReference>
<dbReference type="HOGENOM" id="CLU_019250_2_1_4"/>
<dbReference type="UniPathway" id="UPA00148"/>
<dbReference type="Proteomes" id="UP000000645">
    <property type="component" value="Chromosome"/>
</dbReference>
<dbReference type="GO" id="GO:0015420">
    <property type="term" value="F:ABC-type vitamin B12 transporter activity"/>
    <property type="evidence" value="ECO:0007669"/>
    <property type="project" value="UniProtKB-UniRule"/>
</dbReference>
<dbReference type="GO" id="GO:0003824">
    <property type="term" value="F:catalytic activity"/>
    <property type="evidence" value="ECO:0007669"/>
    <property type="project" value="InterPro"/>
</dbReference>
<dbReference type="GO" id="GO:0009236">
    <property type="term" value="P:cobalamin biosynthetic process"/>
    <property type="evidence" value="ECO:0007669"/>
    <property type="project" value="UniProtKB-UniRule"/>
</dbReference>
<dbReference type="CDD" id="cd05389">
    <property type="entry name" value="CobQ_N"/>
    <property type="match status" value="1"/>
</dbReference>
<dbReference type="CDD" id="cd01750">
    <property type="entry name" value="GATase1_CobQ"/>
    <property type="match status" value="1"/>
</dbReference>
<dbReference type="Gene3D" id="3.40.50.880">
    <property type="match status" value="1"/>
</dbReference>
<dbReference type="Gene3D" id="3.40.50.300">
    <property type="entry name" value="P-loop containing nucleotide triphosphate hydrolases"/>
    <property type="match status" value="1"/>
</dbReference>
<dbReference type="HAMAP" id="MF_00028">
    <property type="entry name" value="CobQ"/>
    <property type="match status" value="1"/>
</dbReference>
<dbReference type="InterPro" id="IPR029062">
    <property type="entry name" value="Class_I_gatase-like"/>
</dbReference>
<dbReference type="InterPro" id="IPR002586">
    <property type="entry name" value="CobQ/CobB/MinD/ParA_Nub-bd_dom"/>
</dbReference>
<dbReference type="InterPro" id="IPR033949">
    <property type="entry name" value="CobQ_GATase1"/>
</dbReference>
<dbReference type="InterPro" id="IPR047045">
    <property type="entry name" value="CobQ_N"/>
</dbReference>
<dbReference type="InterPro" id="IPR004459">
    <property type="entry name" value="CobQ_synth"/>
</dbReference>
<dbReference type="InterPro" id="IPR011698">
    <property type="entry name" value="GATase_3"/>
</dbReference>
<dbReference type="InterPro" id="IPR027417">
    <property type="entry name" value="P-loop_NTPase"/>
</dbReference>
<dbReference type="NCBIfam" id="TIGR00313">
    <property type="entry name" value="cobQ"/>
    <property type="match status" value="1"/>
</dbReference>
<dbReference type="NCBIfam" id="NF001989">
    <property type="entry name" value="PRK00784.1"/>
    <property type="match status" value="1"/>
</dbReference>
<dbReference type="PANTHER" id="PTHR21343:SF1">
    <property type="entry name" value="COBYRIC ACID SYNTHASE"/>
    <property type="match status" value="1"/>
</dbReference>
<dbReference type="PANTHER" id="PTHR21343">
    <property type="entry name" value="DETHIOBIOTIN SYNTHETASE"/>
    <property type="match status" value="1"/>
</dbReference>
<dbReference type="Pfam" id="PF01656">
    <property type="entry name" value="CbiA"/>
    <property type="match status" value="1"/>
</dbReference>
<dbReference type="Pfam" id="PF07685">
    <property type="entry name" value="GATase_3"/>
    <property type="match status" value="1"/>
</dbReference>
<dbReference type="SUPFAM" id="SSF52317">
    <property type="entry name" value="Class I glutamine amidotransferase-like"/>
    <property type="match status" value="1"/>
</dbReference>
<dbReference type="SUPFAM" id="SSF52540">
    <property type="entry name" value="P-loop containing nucleoside triphosphate hydrolases"/>
    <property type="match status" value="1"/>
</dbReference>
<dbReference type="PROSITE" id="PS51274">
    <property type="entry name" value="GATASE_COBBQ"/>
    <property type="match status" value="1"/>
</dbReference>
<proteinExistence type="inferred from homology"/>
<organism>
    <name type="scientific">Acidovorax sp. (strain JS42)</name>
    <dbReference type="NCBI Taxonomy" id="232721"/>
    <lineage>
        <taxon>Bacteria</taxon>
        <taxon>Pseudomonadati</taxon>
        <taxon>Pseudomonadota</taxon>
        <taxon>Betaproteobacteria</taxon>
        <taxon>Burkholderiales</taxon>
        <taxon>Comamonadaceae</taxon>
        <taxon>Acidovorax</taxon>
    </lineage>
</organism>
<evidence type="ECO:0000255" key="1">
    <source>
        <dbReference type="HAMAP-Rule" id="MF_00028"/>
    </source>
</evidence>
<name>COBQ_ACISJ</name>
<protein>
    <recommendedName>
        <fullName evidence="1">Cobyric acid synthase</fullName>
    </recommendedName>
</protein>
<accession>A1WAM6</accession>